<organism>
    <name type="scientific">Arabidopsis thaliana</name>
    <name type="common">Mouse-ear cress</name>
    <dbReference type="NCBI Taxonomy" id="3702"/>
    <lineage>
        <taxon>Eukaryota</taxon>
        <taxon>Viridiplantae</taxon>
        <taxon>Streptophyta</taxon>
        <taxon>Embryophyta</taxon>
        <taxon>Tracheophyta</taxon>
        <taxon>Spermatophyta</taxon>
        <taxon>Magnoliopsida</taxon>
        <taxon>eudicotyledons</taxon>
        <taxon>Gunneridae</taxon>
        <taxon>Pentapetalae</taxon>
        <taxon>rosids</taxon>
        <taxon>malvids</taxon>
        <taxon>Brassicales</taxon>
        <taxon>Brassicaceae</taxon>
        <taxon>Camelineae</taxon>
        <taxon>Arabidopsis</taxon>
    </lineage>
</organism>
<reference key="1">
    <citation type="journal article" date="1999" name="Nature">
        <title>Sequence and analysis of chromosome 2 of the plant Arabidopsis thaliana.</title>
        <authorList>
            <person name="Lin X."/>
            <person name="Kaul S."/>
            <person name="Rounsley S.D."/>
            <person name="Shea T.P."/>
            <person name="Benito M.-I."/>
            <person name="Town C.D."/>
            <person name="Fujii C.Y."/>
            <person name="Mason T.M."/>
            <person name="Bowman C.L."/>
            <person name="Barnstead M.E."/>
            <person name="Feldblyum T.V."/>
            <person name="Buell C.R."/>
            <person name="Ketchum K.A."/>
            <person name="Lee J.J."/>
            <person name="Ronning C.M."/>
            <person name="Koo H.L."/>
            <person name="Moffat K.S."/>
            <person name="Cronin L.A."/>
            <person name="Shen M."/>
            <person name="Pai G."/>
            <person name="Van Aken S."/>
            <person name="Umayam L."/>
            <person name="Tallon L.J."/>
            <person name="Gill J.E."/>
            <person name="Adams M.D."/>
            <person name="Carrera A.J."/>
            <person name="Creasy T.H."/>
            <person name="Goodman H.M."/>
            <person name="Somerville C.R."/>
            <person name="Copenhaver G.P."/>
            <person name="Preuss D."/>
            <person name="Nierman W.C."/>
            <person name="White O."/>
            <person name="Eisen J.A."/>
            <person name="Salzberg S.L."/>
            <person name="Fraser C.M."/>
            <person name="Venter J.C."/>
        </authorList>
    </citation>
    <scope>NUCLEOTIDE SEQUENCE [LARGE SCALE GENOMIC DNA]</scope>
    <source>
        <strain>cv. Columbia</strain>
    </source>
</reference>
<reference key="2">
    <citation type="journal article" date="2017" name="Plant J.">
        <title>Araport11: a complete reannotation of the Arabidopsis thaliana reference genome.</title>
        <authorList>
            <person name="Cheng C.Y."/>
            <person name="Krishnakumar V."/>
            <person name="Chan A.P."/>
            <person name="Thibaud-Nissen F."/>
            <person name="Schobel S."/>
            <person name="Town C.D."/>
        </authorList>
    </citation>
    <scope>GENOME REANNOTATION</scope>
    <source>
        <strain>cv. Columbia</strain>
    </source>
</reference>
<reference key="3">
    <citation type="journal article" date="2006" name="Genes Dev.">
        <title>Auxin biosynthesis by the YUCCA flavin monooxygenases controls the formation of floral organs and vascular tissues in Arabidopsis.</title>
        <authorList>
            <person name="Cheng Y."/>
            <person name="Dai X."/>
            <person name="Zhao Y."/>
        </authorList>
    </citation>
    <scope>GENE FAMILY</scope>
    <scope>NOMENCLATURE</scope>
</reference>
<reference key="4">
    <citation type="journal article" date="2007" name="Plant J.">
        <title>Identification of a flavin-monooxygenase as the S-oxygenating enzyme in aliphatic glucosinolate biosynthesis in Arabidopsis.</title>
        <authorList>
            <person name="Hansen B.G."/>
            <person name="Kliebenstein D.J."/>
            <person name="Halkier B.A."/>
        </authorList>
    </citation>
    <scope>GENE FAMILY</scope>
    <source>
        <strain>cv. Columbia</strain>
    </source>
</reference>
<reference key="5">
    <citation type="journal article" date="2011" name="Proc. Natl. Acad. Sci. U.S.A.">
        <title>Conversion of tryptophan to indole-3-acetic acid by TRYPTOPHAN AMINOTRANSFERASES OF ARABIDOPSIS and YUCCAs in Arabidopsis.</title>
        <authorList>
            <person name="Won C."/>
            <person name="Shen X."/>
            <person name="Mashiguchi K."/>
            <person name="Zheng Z."/>
            <person name="Dai X."/>
            <person name="Cheng Y."/>
            <person name="Kasahara H."/>
            <person name="Kamiya Y."/>
            <person name="Chory J."/>
            <person name="Zhao Y."/>
        </authorList>
    </citation>
    <scope>FUNCTION</scope>
</reference>
<reference key="6">
    <citation type="journal article" date="2012" name="Planta">
        <title>Activation of a flavin monooxygenase gene YUCCA7 enhances drought resistance in Arabidopsis.</title>
        <authorList>
            <person name="Lee M."/>
            <person name="Jung J.H."/>
            <person name="Han D.Y."/>
            <person name="Seo P.J."/>
            <person name="Park W.J."/>
            <person name="Park C.M."/>
        </authorList>
    </citation>
    <scope>FUNCTION</scope>
    <scope>TISSUE SPECIFICITY</scope>
    <scope>INDUCTION</scope>
    <scope>DISRUPTION PHENOTYPE</scope>
</reference>
<accession>O49312</accession>
<name>YUC7_ARATH</name>
<evidence type="ECO:0000250" key="1"/>
<evidence type="ECO:0000255" key="2"/>
<evidence type="ECO:0000269" key="3">
    <source>
    </source>
</evidence>
<evidence type="ECO:0000269" key="4">
    <source>
    </source>
</evidence>
<evidence type="ECO:0000305" key="5"/>
<feature type="chain" id="PRO_0000400074" description="Probable indole-3-pyruvate monooxygenase YUCCA7">
    <location>
        <begin position="1"/>
        <end position="431"/>
    </location>
</feature>
<feature type="binding site" evidence="2">
    <location>
        <begin position="36"/>
        <end position="41"/>
    </location>
    <ligand>
        <name>FAD</name>
        <dbReference type="ChEBI" id="CHEBI:57692"/>
    </ligand>
</feature>
<feature type="binding site" evidence="2">
    <location>
        <begin position="207"/>
        <end position="212"/>
    </location>
    <ligand>
        <name>NADP(+)</name>
        <dbReference type="ChEBI" id="CHEBI:58349"/>
    </ligand>
</feature>
<dbReference type="EC" id="1.14.13.168"/>
<dbReference type="EMBL" id="AC002334">
    <property type="protein sequence ID" value="AAC04900.1"/>
    <property type="molecule type" value="Genomic_DNA"/>
</dbReference>
<dbReference type="EMBL" id="CP002685">
    <property type="protein sequence ID" value="AEC08802.1"/>
    <property type="molecule type" value="Genomic_DNA"/>
</dbReference>
<dbReference type="PIR" id="H84742">
    <property type="entry name" value="H84742"/>
</dbReference>
<dbReference type="RefSeq" id="NP_180881.1">
    <property type="nucleotide sequence ID" value="NM_128882.2"/>
</dbReference>
<dbReference type="SMR" id="O49312"/>
<dbReference type="STRING" id="3702.O49312"/>
<dbReference type="PaxDb" id="3702-AT2G33230.1"/>
<dbReference type="EnsemblPlants" id="AT2G33230.1">
    <property type="protein sequence ID" value="AT2G33230.1"/>
    <property type="gene ID" value="AT2G33230"/>
</dbReference>
<dbReference type="GeneID" id="817885"/>
<dbReference type="Gramene" id="AT2G33230.1">
    <property type="protein sequence ID" value="AT2G33230.1"/>
    <property type="gene ID" value="AT2G33230"/>
</dbReference>
<dbReference type="KEGG" id="ath:AT2G33230"/>
<dbReference type="Araport" id="AT2G33230"/>
<dbReference type="TAIR" id="AT2G33230">
    <property type="gene designation" value="YUC7"/>
</dbReference>
<dbReference type="eggNOG" id="KOG1399">
    <property type="taxonomic scope" value="Eukaryota"/>
</dbReference>
<dbReference type="HOGENOM" id="CLU_006909_2_0_1"/>
<dbReference type="InParanoid" id="O49312"/>
<dbReference type="OMA" id="CVNISSM"/>
<dbReference type="PhylomeDB" id="O49312"/>
<dbReference type="UniPathway" id="UPA00151"/>
<dbReference type="PRO" id="PR:O49312"/>
<dbReference type="Proteomes" id="UP000006548">
    <property type="component" value="Chromosome 2"/>
</dbReference>
<dbReference type="ExpressionAtlas" id="O49312">
    <property type="expression patterns" value="baseline and differential"/>
</dbReference>
<dbReference type="GO" id="GO:0050660">
    <property type="term" value="F:flavin adenine dinucleotide binding"/>
    <property type="evidence" value="ECO:0007669"/>
    <property type="project" value="InterPro"/>
</dbReference>
<dbReference type="GO" id="GO:0103075">
    <property type="term" value="F:indole-3-pyruvate monooxygenase activity"/>
    <property type="evidence" value="ECO:0007669"/>
    <property type="project" value="UniProtKB-EC"/>
</dbReference>
<dbReference type="GO" id="GO:0004499">
    <property type="term" value="F:N,N-dimethylaniline monooxygenase activity"/>
    <property type="evidence" value="ECO:0007669"/>
    <property type="project" value="InterPro"/>
</dbReference>
<dbReference type="GO" id="GO:0050661">
    <property type="term" value="F:NADP binding"/>
    <property type="evidence" value="ECO:0007669"/>
    <property type="project" value="InterPro"/>
</dbReference>
<dbReference type="GO" id="GO:0009684">
    <property type="term" value="P:indoleacetic acid biosynthetic process"/>
    <property type="evidence" value="ECO:0000315"/>
    <property type="project" value="TAIR"/>
</dbReference>
<dbReference type="GO" id="GO:0009414">
    <property type="term" value="P:response to water deprivation"/>
    <property type="evidence" value="ECO:0000315"/>
    <property type="project" value="TAIR"/>
</dbReference>
<dbReference type="FunFam" id="3.50.50.60:FF:000100">
    <property type="entry name" value="Flavin-containing monooxygenase"/>
    <property type="match status" value="1"/>
</dbReference>
<dbReference type="Gene3D" id="3.50.50.60">
    <property type="entry name" value="FAD/NAD(P)-binding domain"/>
    <property type="match status" value="1"/>
</dbReference>
<dbReference type="InterPro" id="IPR050982">
    <property type="entry name" value="Auxin_biosynth/cation_transpt"/>
</dbReference>
<dbReference type="InterPro" id="IPR036188">
    <property type="entry name" value="FAD/NAD-bd_sf"/>
</dbReference>
<dbReference type="InterPro" id="IPR020946">
    <property type="entry name" value="Flavin_mOase-like"/>
</dbReference>
<dbReference type="PANTHER" id="PTHR43539">
    <property type="entry name" value="FLAVIN-BINDING MONOOXYGENASE-LIKE PROTEIN (AFU_ORTHOLOGUE AFUA_4G09220)"/>
    <property type="match status" value="1"/>
</dbReference>
<dbReference type="PANTHER" id="PTHR43539:SF49">
    <property type="entry name" value="INDOLE-3-PYRUVATE MONOOXYGENASE YUCCA7-RELATED"/>
    <property type="match status" value="1"/>
</dbReference>
<dbReference type="Pfam" id="PF00743">
    <property type="entry name" value="FMO-like"/>
    <property type="match status" value="1"/>
</dbReference>
<dbReference type="PRINTS" id="PR00368">
    <property type="entry name" value="FADPNR"/>
</dbReference>
<dbReference type="PRINTS" id="PR00469">
    <property type="entry name" value="PNDRDTASEII"/>
</dbReference>
<dbReference type="SUPFAM" id="SSF51905">
    <property type="entry name" value="FAD/NAD(P)-binding domain"/>
    <property type="match status" value="2"/>
</dbReference>
<protein>
    <recommendedName>
        <fullName>Probable indole-3-pyruvate monooxygenase YUCCA7</fullName>
        <ecNumber>1.14.13.168</ecNumber>
    </recommendedName>
    <alternativeName>
        <fullName>Flavin-containing monooxygenase YUCCA7</fullName>
    </alternativeName>
</protein>
<keyword id="KW-0073">Auxin biosynthesis</keyword>
<keyword id="KW-0274">FAD</keyword>
<keyword id="KW-0285">Flavoprotein</keyword>
<keyword id="KW-0503">Monooxygenase</keyword>
<keyword id="KW-0521">NADP</keyword>
<keyword id="KW-0560">Oxidoreductase</keyword>
<keyword id="KW-1185">Reference proteome</keyword>
<proteinExistence type="evidence at transcript level"/>
<comment type="function">
    <text evidence="3 4">Involved in auxin biosynthesis. Belongs to the set of redundant YUCCA genes probably responsible for auxin biosynthesis in roots.</text>
</comment>
<comment type="catalytic activity">
    <reaction>
        <text>indole-3-pyruvate + NADPH + O2 + H(+) = (indol-3-yl)acetate + CO2 + NADP(+) + H2O</text>
        <dbReference type="Rhea" id="RHEA:34331"/>
        <dbReference type="ChEBI" id="CHEBI:15377"/>
        <dbReference type="ChEBI" id="CHEBI:15378"/>
        <dbReference type="ChEBI" id="CHEBI:15379"/>
        <dbReference type="ChEBI" id="CHEBI:16526"/>
        <dbReference type="ChEBI" id="CHEBI:17640"/>
        <dbReference type="ChEBI" id="CHEBI:30854"/>
        <dbReference type="ChEBI" id="CHEBI:57783"/>
        <dbReference type="ChEBI" id="CHEBI:58349"/>
        <dbReference type="EC" id="1.14.13.168"/>
    </reaction>
</comment>
<comment type="cofactor">
    <cofactor evidence="1">
        <name>FAD</name>
        <dbReference type="ChEBI" id="CHEBI:57692"/>
    </cofactor>
</comment>
<comment type="pathway">
    <text>Plant hormone metabolism; auxin biosynthesis.</text>
</comment>
<comment type="tissue specificity">
    <text evidence="4">Expressed in shoot apex regions and siliques, and at high levels in roots. Detected in flowers, stems and leaves.</text>
</comment>
<comment type="induction">
    <text evidence="4">Up-regulated by drought and by abscisic acid.</text>
</comment>
<comment type="disruption phenotype">
    <text evidence="4">No visible phenotype, due to the redundancy with the other members of the YUCCA family.</text>
</comment>
<comment type="similarity">
    <text evidence="5">Belongs to the FMO family.</text>
</comment>
<sequence length="431" mass="48148">MCNNNNTSCVNISSMLQPEDIFSRRCIWVNGPVIVGAGPSGLAVAADLKRQEVPFVILERANCIASLWQNRTYDRLKLHLPKQFCQLPNLPFPEDIPEYPTKYQFIEYLESYATHFDLRPKFNETVQSAKYDKRFGLWRVQTVLRSELLGYCEFEYICRWLVVATGENAEKVVPEFEGLEDFGGDVLHAGDYKSGERYRGKRVLVVGCGNSGMEVSLDLCNHDASPSMVVRSSVHVLPREVLGKSTFELSVTMMKWMPVWLVDKTLLVLTRLLLGNTDKYGLKRPEIGPLELKNTAGKTPVLDIGAISMIKSGKIKIVAGIAKFGPGKVELVDGRVLQIDSVILATGYRSNVPSWLKENDLGEIGIEKNPFPKGWKGKAGLYAVGFTGRGLSGASFDAMSVAHDIANSWKEETKQQIKTVATRHRRCISHF</sequence>
<gene>
    <name type="primary">YUC7</name>
    <name type="synonym">YUCCA7</name>
    <name type="ordered locus">At2g33230</name>
    <name type="ORF">F25I18.3</name>
</gene>